<organism>
    <name type="scientific">Methanocaldococcus jannaschii (strain ATCC 43067 / DSM 2661 / JAL-1 / JCM 10045 / NBRC 100440)</name>
    <name type="common">Methanococcus jannaschii</name>
    <dbReference type="NCBI Taxonomy" id="243232"/>
    <lineage>
        <taxon>Archaea</taxon>
        <taxon>Methanobacteriati</taxon>
        <taxon>Methanobacteriota</taxon>
        <taxon>Methanomada group</taxon>
        <taxon>Methanococci</taxon>
        <taxon>Methanococcales</taxon>
        <taxon>Methanocaldococcaceae</taxon>
        <taxon>Methanocaldococcus</taxon>
    </lineage>
</organism>
<dbReference type="EC" id="5.4.99.27" evidence="1"/>
<dbReference type="EMBL" id="L77117">
    <property type="protein sequence ID" value="AAB98579.1"/>
    <property type="status" value="ALT_INIT"/>
    <property type="molecule type" value="Genomic_DNA"/>
</dbReference>
<dbReference type="PIR" id="D64373">
    <property type="entry name" value="D64373"/>
</dbReference>
<dbReference type="SMR" id="Q58008"/>
<dbReference type="FunCoup" id="Q58008">
    <property type="interactions" value="85"/>
</dbReference>
<dbReference type="STRING" id="243232.MJ_0588"/>
<dbReference type="PaxDb" id="243232-MJ_0588"/>
<dbReference type="EnsemblBacteria" id="AAB98579">
    <property type="protein sequence ID" value="AAB98579"/>
    <property type="gene ID" value="MJ_0588"/>
</dbReference>
<dbReference type="GeneID" id="1451453"/>
<dbReference type="KEGG" id="mja:MJ_0588"/>
<dbReference type="eggNOG" id="arCOG04252">
    <property type="taxonomic scope" value="Archaea"/>
</dbReference>
<dbReference type="HOGENOM" id="CLU_005281_4_1_2"/>
<dbReference type="InParanoid" id="Q58008"/>
<dbReference type="OrthoDB" id="1798at2157"/>
<dbReference type="PhylomeDB" id="Q58008"/>
<dbReference type="Proteomes" id="UP000000805">
    <property type="component" value="Chromosome"/>
</dbReference>
<dbReference type="GO" id="GO:0009982">
    <property type="term" value="F:pseudouridine synthase activity"/>
    <property type="evidence" value="ECO:0000318"/>
    <property type="project" value="GO_Central"/>
</dbReference>
<dbReference type="GO" id="GO:0003723">
    <property type="term" value="F:RNA binding"/>
    <property type="evidence" value="ECO:0007669"/>
    <property type="project" value="InterPro"/>
</dbReference>
<dbReference type="GO" id="GO:0160150">
    <property type="term" value="F:tRNA pseudouridine(13) synthase activity"/>
    <property type="evidence" value="ECO:0007669"/>
    <property type="project" value="UniProtKB-EC"/>
</dbReference>
<dbReference type="GO" id="GO:0001522">
    <property type="term" value="P:pseudouridine synthesis"/>
    <property type="evidence" value="ECO:0000318"/>
    <property type="project" value="GO_Central"/>
</dbReference>
<dbReference type="GO" id="GO:0031119">
    <property type="term" value="P:tRNA pseudouridine synthesis"/>
    <property type="evidence" value="ECO:0007669"/>
    <property type="project" value="UniProtKB-UniRule"/>
</dbReference>
<dbReference type="CDD" id="cd02577">
    <property type="entry name" value="PSTD1"/>
    <property type="match status" value="1"/>
</dbReference>
<dbReference type="Gene3D" id="3.30.2350.20">
    <property type="entry name" value="TruD, catalytic domain"/>
    <property type="match status" value="3"/>
</dbReference>
<dbReference type="HAMAP" id="MF_01082">
    <property type="entry name" value="TruD"/>
    <property type="match status" value="1"/>
</dbReference>
<dbReference type="InterPro" id="IPR020103">
    <property type="entry name" value="PsdUridine_synth_cat_dom_sf"/>
</dbReference>
<dbReference type="InterPro" id="IPR001656">
    <property type="entry name" value="PsdUridine_synth_TruD"/>
</dbReference>
<dbReference type="InterPro" id="IPR011760">
    <property type="entry name" value="PsdUridine_synth_TruD_insert"/>
</dbReference>
<dbReference type="InterPro" id="IPR042214">
    <property type="entry name" value="TruD_catalytic"/>
</dbReference>
<dbReference type="NCBIfam" id="TIGR00094">
    <property type="entry name" value="tRNA_TruD_broad"/>
    <property type="match status" value="1"/>
</dbReference>
<dbReference type="PANTHER" id="PTHR13326:SF21">
    <property type="entry name" value="PSEUDOURIDYLATE SYNTHASE PUS7L"/>
    <property type="match status" value="1"/>
</dbReference>
<dbReference type="PANTHER" id="PTHR13326">
    <property type="entry name" value="TRNA PSEUDOURIDINE SYNTHASE D"/>
    <property type="match status" value="1"/>
</dbReference>
<dbReference type="Pfam" id="PF01142">
    <property type="entry name" value="TruD"/>
    <property type="match status" value="2"/>
</dbReference>
<dbReference type="PIRSF" id="PIRSF037016">
    <property type="entry name" value="Pseudouridin_synth_euk_prd"/>
    <property type="match status" value="1"/>
</dbReference>
<dbReference type="SUPFAM" id="SSF55120">
    <property type="entry name" value="Pseudouridine synthase"/>
    <property type="match status" value="1"/>
</dbReference>
<dbReference type="PROSITE" id="PS50984">
    <property type="entry name" value="TRUD"/>
    <property type="match status" value="1"/>
</dbReference>
<dbReference type="PROSITE" id="PS01268">
    <property type="entry name" value="UPF0024"/>
    <property type="match status" value="1"/>
</dbReference>
<feature type="chain" id="PRO_0000152540" description="Probable tRNA pseudouridine synthase D 1">
    <location>
        <begin position="1"/>
        <end position="392"/>
    </location>
</feature>
<feature type="domain" description="TRUD" evidence="1">
    <location>
        <begin position="167"/>
        <end position="354"/>
    </location>
</feature>
<feature type="active site" description="Nucleophile" evidence="1">
    <location>
        <position position="92"/>
    </location>
</feature>
<proteinExistence type="inferred from homology"/>
<sequence length="392" mass="46320">MPLNMNKYLTDAYTGGIIKKYPEDFIVEEITPEGIILEVGKSIEFKDEENWKGNYIHFTLEKRNWTTLDAIREIANRVGKQRKHFGFAGNKDKYAVTTQRVGCFNVKLEDLMKVKIKGIILRDFQKTNRKIRLGDLWGNRFTIRVREPELKGKELEEALNKLCKLKYFLNYYGVQRFGTTRPITHIVGRFIIERDWEGAFHAYCGTPLPYDDKKSKLARELVDEENFKEAYKKFPKAFFYERRMIKAYIETGSYQKAFMILPPYLRCMFINAYQSYLFNEIINRRFEYGFEPMEGDILIDNVPSGALFGYKTRFASGIQGEIEREIYERENLSPEDFKIGEFGSFIGDRRAMIGKIYNMKYWIEDDSYVLQFCLKKGNYATSVLREFIEKKD</sequence>
<keyword id="KW-0413">Isomerase</keyword>
<keyword id="KW-1185">Reference proteome</keyword>
<keyword id="KW-0819">tRNA processing</keyword>
<accession>Q58008</accession>
<reference key="1">
    <citation type="journal article" date="1996" name="Science">
        <title>Complete genome sequence of the methanogenic archaeon, Methanococcus jannaschii.</title>
        <authorList>
            <person name="Bult C.J."/>
            <person name="White O."/>
            <person name="Olsen G.J."/>
            <person name="Zhou L."/>
            <person name="Fleischmann R.D."/>
            <person name="Sutton G.G."/>
            <person name="Blake J.A."/>
            <person name="FitzGerald L.M."/>
            <person name="Clayton R.A."/>
            <person name="Gocayne J.D."/>
            <person name="Kerlavage A.R."/>
            <person name="Dougherty B.A."/>
            <person name="Tomb J.-F."/>
            <person name="Adams M.D."/>
            <person name="Reich C.I."/>
            <person name="Overbeek R."/>
            <person name="Kirkness E.F."/>
            <person name="Weinstock K.G."/>
            <person name="Merrick J.M."/>
            <person name="Glodek A."/>
            <person name="Scott J.L."/>
            <person name="Geoghagen N.S.M."/>
            <person name="Weidman J.F."/>
            <person name="Fuhrmann J.L."/>
            <person name="Nguyen D."/>
            <person name="Utterback T.R."/>
            <person name="Kelley J.M."/>
            <person name="Peterson J.D."/>
            <person name="Sadow P.W."/>
            <person name="Hanna M.C."/>
            <person name="Cotton M.D."/>
            <person name="Roberts K.M."/>
            <person name="Hurst M.A."/>
            <person name="Kaine B.P."/>
            <person name="Borodovsky M."/>
            <person name="Klenk H.-P."/>
            <person name="Fraser C.M."/>
            <person name="Smith H.O."/>
            <person name="Woese C.R."/>
            <person name="Venter J.C."/>
        </authorList>
    </citation>
    <scope>NUCLEOTIDE SEQUENCE [LARGE SCALE GENOMIC DNA]</scope>
    <source>
        <strain>ATCC 43067 / DSM 2661 / JAL-1 / JCM 10045 / NBRC 100440</strain>
    </source>
</reference>
<evidence type="ECO:0000255" key="1">
    <source>
        <dbReference type="HAMAP-Rule" id="MF_01082"/>
    </source>
</evidence>
<evidence type="ECO:0000305" key="2"/>
<name>TRUD1_METJA</name>
<protein>
    <recommendedName>
        <fullName evidence="1">Probable tRNA pseudouridine synthase D 1</fullName>
        <ecNumber evidence="1">5.4.99.27</ecNumber>
    </recommendedName>
    <alternativeName>
        <fullName evidence="1">tRNA pseudouridine(13) synthase</fullName>
    </alternativeName>
    <alternativeName>
        <fullName evidence="1">tRNA pseudouridylate synthase D 1</fullName>
    </alternativeName>
    <alternativeName>
        <fullName evidence="1">tRNA-uridine isomerase D 1</fullName>
    </alternativeName>
</protein>
<comment type="function">
    <text evidence="1">Could be responsible for synthesis of pseudouridine from uracil-13 in transfer RNAs.</text>
</comment>
<comment type="catalytic activity">
    <reaction evidence="1">
        <text>uridine(13) in tRNA = pseudouridine(13) in tRNA</text>
        <dbReference type="Rhea" id="RHEA:42540"/>
        <dbReference type="Rhea" id="RHEA-COMP:10105"/>
        <dbReference type="Rhea" id="RHEA-COMP:10106"/>
        <dbReference type="ChEBI" id="CHEBI:65314"/>
        <dbReference type="ChEBI" id="CHEBI:65315"/>
        <dbReference type="EC" id="5.4.99.27"/>
    </reaction>
</comment>
<comment type="similarity">
    <text evidence="1">Belongs to the pseudouridine synthase TruD family.</text>
</comment>
<comment type="sequence caution" evidence="2">
    <conflict type="erroneous initiation">
        <sequence resource="EMBL-CDS" id="AAB98579"/>
    </conflict>
</comment>
<gene>
    <name evidence="1" type="primary">truD1</name>
    <name type="ordered locus">MJ0588</name>
</gene>